<feature type="chain" id="PRO_0000084131" description="Islet cell autoantigen 1">
    <location>
        <begin position="1"/>
        <end position="478"/>
    </location>
</feature>
<feature type="domain" description="AH" evidence="2">
    <location>
        <begin position="50"/>
        <end position="253"/>
    </location>
</feature>
<feature type="region of interest" description="Disordered" evidence="3">
    <location>
        <begin position="306"/>
        <end position="365"/>
    </location>
</feature>
<feature type="region of interest" description="Disordered" evidence="3">
    <location>
        <begin position="398"/>
        <end position="422"/>
    </location>
</feature>
<feature type="compositionally biased region" description="Basic and acidic residues" evidence="3">
    <location>
        <begin position="306"/>
        <end position="317"/>
    </location>
</feature>
<feature type="splice variant" id="VSP_050425" description="In isoform 2." evidence="8">
    <original>T</original>
    <variation>R</variation>
    <location>
        <position position="315"/>
    </location>
</feature>
<feature type="splice variant" id="VSP_050426" description="In isoform 2." evidence="8">
    <location>
        <begin position="316"/>
        <end position="336"/>
    </location>
</feature>
<feature type="sequence conflict" description="In Ref. 1; AAB19182." evidence="9" ref="1">
    <original>L</original>
    <variation>F</variation>
    <location>
        <position position="170"/>
    </location>
</feature>
<feature type="sequence conflict" description="In Ref. 1; AAB19182/AAC52992/AAC52993/AAB40939, 4; AAH02030 and 5; AAC99989." evidence="9" ref="1 4 5">
    <original>A</original>
    <variation>T</variation>
    <location>
        <position position="312"/>
    </location>
</feature>
<feature type="sequence conflict" description="In Ref. 1; AAB19182/AAC52992/AAC52993/AAB40939, 4; AAH02030 and 5; AAC99989." evidence="9" ref="1 4 5">
    <original>Q</original>
    <variation>R</variation>
    <location>
        <position position="397"/>
    </location>
</feature>
<comment type="function">
    <text evidence="7">May play a role in neurotransmitter secretion.</text>
</comment>
<comment type="interaction">
    <interactant intactId="EBI-16056188">
        <id>P97411</id>
    </interactant>
    <interactant intactId="EBI-77550">
        <id>Q62083</id>
        <label>Pick1</label>
    </interactant>
    <organismsDiffer>false</organismsDiffer>
    <experiments>2</experiments>
</comment>
<comment type="subcellular location">
    <subcellularLocation>
        <location evidence="4">Cytoplasm</location>
        <location evidence="4">Cytosol</location>
    </subcellularLocation>
    <subcellularLocation>
        <location evidence="1">Golgi apparatus membrane</location>
        <topology evidence="1">Peripheral membrane protein</topology>
    </subcellularLocation>
    <subcellularLocation>
        <location evidence="1">Cytoplasmic vesicle</location>
        <location evidence="1">Secretory vesicle membrane</location>
        <topology evidence="1">Peripheral membrane protein</topology>
    </subcellularLocation>
    <subcellularLocation>
        <location evidence="1">Cytoplasmic vesicle</location>
        <location evidence="1">Secretory vesicle</location>
        <location evidence="1">Synaptic vesicle membrane</location>
        <topology evidence="1">Peripheral membrane protein</topology>
    </subcellularLocation>
    <text>Predominantly cytosolic. Also exists as a membrane-bound form which has been found associated with synaptic vesicles and also with the Golgi complex and immature secretory granules.</text>
</comment>
<comment type="alternative products">
    <event type="alternative splicing"/>
    <isoform>
        <id>P97411-1</id>
        <name evidence="6">1</name>
        <name evidence="8">Alpha</name>
        <sequence type="displayed"/>
    </isoform>
    <isoform>
        <id>P97411-2</id>
        <name evidence="6">2</name>
        <name evidence="8">Beta</name>
        <sequence type="described" ref="VSP_050425 VSP_050426"/>
    </isoform>
    <text>Additional isoforms seem to exist.</text>
</comment>
<comment type="tissue specificity">
    <text evidence="4">Predominantly expressed in brain, pancreas and stomach mucosa. High expression also found in stomach muscle and testis.</text>
</comment>
<comment type="disruption phenotype">
    <text evidence="5">129/SvJ mice lacking Ica1 do not display an obvious phenotype and age normally, while NOD mice without Ica1 develop diabetes and display sudden mid-life lethality but are resistant to cyclophosphamide-induced disease acceleration.</text>
</comment>
<sequence>MSGHKCYSWELQDRFAQDKSVVNKMQQKYWETKQAFIKATGKKEDEHVVASDADLDAKLELFHSIQRTCLDLSKAIVLYQKRICFLSQEENELGKFLRSQGFQDKTRAGKMMQATGKALCFSSQQRLALRNPLCRFHQEVETFRHRAISDTWLTVNRMEQYRTEYRGALLWMKDVSQELDPDLYKQMEKFRKVQTQVRLAKKNFDKLKMDVCQKVDLLGASRCNLLSHMLATYQTTLLHFWEKTSHTMAAIHESFKGYQPYEFTTLKSLQDPMKKLVEKEGKKTSWRENREAVAPEPRQLISLEDEHKDSSAYKTEEGTSVLSSVDKGSVHDTCSGPIDELLDGKPEEACLGPTAGTPEPESGDKDDLLLLNEIFSTSCLDEGEFSREWAAVFGDDQLKEPAPMGAQGEPDPKPQIGSGFLPSQLLDQNMKDLQASLQEPAKAASDLTAWFSLFADLDPLSNPDAVGKTDKEHELLNA</sequence>
<keyword id="KW-0025">Alternative splicing</keyword>
<keyword id="KW-0963">Cytoplasm</keyword>
<keyword id="KW-0968">Cytoplasmic vesicle</keyword>
<keyword id="KW-0333">Golgi apparatus</keyword>
<keyword id="KW-0472">Membrane</keyword>
<keyword id="KW-0532">Neurotransmitter transport</keyword>
<keyword id="KW-1185">Reference proteome</keyword>
<keyword id="KW-0770">Synapse</keyword>
<keyword id="KW-0813">Transport</keyword>
<organism>
    <name type="scientific">Mus musculus</name>
    <name type="common">Mouse</name>
    <dbReference type="NCBI Taxonomy" id="10090"/>
    <lineage>
        <taxon>Eukaryota</taxon>
        <taxon>Metazoa</taxon>
        <taxon>Chordata</taxon>
        <taxon>Craniata</taxon>
        <taxon>Vertebrata</taxon>
        <taxon>Euteleostomi</taxon>
        <taxon>Mammalia</taxon>
        <taxon>Eutheria</taxon>
        <taxon>Euarchontoglires</taxon>
        <taxon>Glires</taxon>
        <taxon>Rodentia</taxon>
        <taxon>Myomorpha</taxon>
        <taxon>Muroidea</taxon>
        <taxon>Muridae</taxon>
        <taxon>Murinae</taxon>
        <taxon>Mus</taxon>
        <taxon>Mus</taxon>
    </lineage>
</organism>
<proteinExistence type="evidence at protein level"/>
<dbReference type="EMBL" id="U26459">
    <property type="protein sequence ID" value="AAC52992.1"/>
    <property type="molecule type" value="mRNA"/>
</dbReference>
<dbReference type="EMBL" id="U26460">
    <property type="protein sequence ID" value="AAB40939.1"/>
    <property type="molecule type" value="mRNA"/>
</dbReference>
<dbReference type="EMBL" id="U26461">
    <property type="protein sequence ID" value="AAC52993.1"/>
    <property type="molecule type" value="mRNA"/>
</dbReference>
<dbReference type="EMBL" id="U37186">
    <property type="protein sequence ID" value="AAB19182.1"/>
    <property type="molecule type" value="Genomic_DNA"/>
</dbReference>
<dbReference type="EMBL" id="U37013">
    <property type="protein sequence ID" value="AAB19182.1"/>
    <property type="status" value="JOINED"/>
    <property type="molecule type" value="Genomic_DNA"/>
</dbReference>
<dbReference type="EMBL" id="U37014">
    <property type="protein sequence ID" value="AAB19182.1"/>
    <property type="status" value="JOINED"/>
    <property type="molecule type" value="Genomic_DNA"/>
</dbReference>
<dbReference type="EMBL" id="U37015">
    <property type="protein sequence ID" value="AAB19182.1"/>
    <property type="status" value="JOINED"/>
    <property type="molecule type" value="Genomic_DNA"/>
</dbReference>
<dbReference type="EMBL" id="U37082">
    <property type="protein sequence ID" value="AAB19182.1"/>
    <property type="status" value="JOINED"/>
    <property type="molecule type" value="Genomic_DNA"/>
</dbReference>
<dbReference type="EMBL" id="U37083">
    <property type="protein sequence ID" value="AAB19182.1"/>
    <property type="status" value="JOINED"/>
    <property type="molecule type" value="Genomic_DNA"/>
</dbReference>
<dbReference type="EMBL" id="U37084">
    <property type="protein sequence ID" value="AAB19182.1"/>
    <property type="status" value="JOINED"/>
    <property type="molecule type" value="Genomic_DNA"/>
</dbReference>
<dbReference type="EMBL" id="U37085">
    <property type="protein sequence ID" value="AAB19182.1"/>
    <property type="status" value="JOINED"/>
    <property type="molecule type" value="Genomic_DNA"/>
</dbReference>
<dbReference type="EMBL" id="U37086">
    <property type="protein sequence ID" value="AAB19182.1"/>
    <property type="status" value="JOINED"/>
    <property type="molecule type" value="Genomic_DNA"/>
</dbReference>
<dbReference type="EMBL" id="U37184">
    <property type="protein sequence ID" value="AAB19182.1"/>
    <property type="status" value="JOINED"/>
    <property type="molecule type" value="Genomic_DNA"/>
</dbReference>
<dbReference type="EMBL" id="U37185">
    <property type="protein sequence ID" value="AAB19182.1"/>
    <property type="status" value="JOINED"/>
    <property type="molecule type" value="Genomic_DNA"/>
</dbReference>
<dbReference type="EMBL" id="AC158670">
    <property type="status" value="NOT_ANNOTATED_CDS"/>
    <property type="molecule type" value="Genomic_DNA"/>
</dbReference>
<dbReference type="EMBL" id="BC002030">
    <property type="protein sequence ID" value="AAH02030.1"/>
    <property type="molecule type" value="mRNA"/>
</dbReference>
<dbReference type="EMBL" id="U34595">
    <property type="protein sequence ID" value="AAC99989.1"/>
    <property type="molecule type" value="mRNA"/>
</dbReference>
<dbReference type="CCDS" id="CCDS19911.1">
    <molecule id="P97411-1"/>
</dbReference>
<dbReference type="RefSeq" id="NP_001239195.1">
    <molecule id="P97411-2"/>
    <property type="nucleotide sequence ID" value="NM_001252266.2"/>
</dbReference>
<dbReference type="RefSeq" id="NP_001396972.1">
    <molecule id="P97411-1"/>
    <property type="nucleotide sequence ID" value="NM_001410043.1"/>
</dbReference>
<dbReference type="RefSeq" id="NP_001396973.1">
    <molecule id="P97411-1"/>
    <property type="nucleotide sequence ID" value="NM_001410044.1"/>
</dbReference>
<dbReference type="RefSeq" id="NP_001396974.1">
    <molecule id="P97411-2"/>
    <property type="nucleotide sequence ID" value="NM_001410045.1"/>
</dbReference>
<dbReference type="RefSeq" id="NP_001396975.1">
    <molecule id="P97411-2"/>
    <property type="nucleotide sequence ID" value="NM_001410046.1"/>
</dbReference>
<dbReference type="RefSeq" id="NP_034622.3">
    <molecule id="P97411-1"/>
    <property type="nucleotide sequence ID" value="NM_010492.3"/>
</dbReference>
<dbReference type="RefSeq" id="XP_006505056.1">
    <property type="nucleotide sequence ID" value="XM_006504993.3"/>
</dbReference>
<dbReference type="RefSeq" id="XP_006505057.1">
    <property type="nucleotide sequence ID" value="XM_006504994.3"/>
</dbReference>
<dbReference type="RefSeq" id="XP_006505058.1">
    <property type="nucleotide sequence ID" value="XM_006504995.3"/>
</dbReference>
<dbReference type="SMR" id="P97411"/>
<dbReference type="BioGRID" id="200500">
    <property type="interactions" value="2"/>
</dbReference>
<dbReference type="DIP" id="DIP-60170N"/>
<dbReference type="FunCoup" id="P97411">
    <property type="interactions" value="970"/>
</dbReference>
<dbReference type="IntAct" id="P97411">
    <property type="interactions" value="1"/>
</dbReference>
<dbReference type="STRING" id="10090.ENSMUSP00000040062"/>
<dbReference type="GlyGen" id="P97411">
    <property type="glycosylation" value="1 site"/>
</dbReference>
<dbReference type="iPTMnet" id="P97411"/>
<dbReference type="PhosphoSitePlus" id="P97411"/>
<dbReference type="PaxDb" id="10090-ENSMUSP00000040062"/>
<dbReference type="ProteomicsDB" id="269520">
    <molecule id="P97411-1"/>
</dbReference>
<dbReference type="ProteomicsDB" id="269521">
    <molecule id="P97411-2"/>
</dbReference>
<dbReference type="Antibodypedia" id="1895">
    <property type="antibodies" value="256 antibodies from 29 providers"/>
</dbReference>
<dbReference type="DNASU" id="15893"/>
<dbReference type="Ensembl" id="ENSMUST00000038403.12">
    <molecule id="P97411-1"/>
    <property type="protein sequence ID" value="ENSMUSP00000040062.6"/>
    <property type="gene ID" value="ENSMUSG00000062995.13"/>
</dbReference>
<dbReference type="Ensembl" id="ENSMUST00000115520.8">
    <molecule id="P97411-1"/>
    <property type="protein sequence ID" value="ENSMUSP00000111182.2"/>
    <property type="gene ID" value="ENSMUSG00000062995.13"/>
</dbReference>
<dbReference type="GeneID" id="15893"/>
<dbReference type="KEGG" id="mmu:15893"/>
<dbReference type="UCSC" id="uc009axx.1">
    <molecule id="P97411-2"/>
    <property type="organism name" value="mouse"/>
</dbReference>
<dbReference type="UCSC" id="uc009axy.1">
    <molecule id="P97411-1"/>
    <property type="organism name" value="mouse"/>
</dbReference>
<dbReference type="AGR" id="MGI:96391"/>
<dbReference type="CTD" id="3382"/>
<dbReference type="MGI" id="MGI:96391">
    <property type="gene designation" value="Ica1"/>
</dbReference>
<dbReference type="VEuPathDB" id="HostDB:ENSMUSG00000062995"/>
<dbReference type="eggNOG" id="KOG3891">
    <property type="taxonomic scope" value="Eukaryota"/>
</dbReference>
<dbReference type="GeneTree" id="ENSGT00390000005530"/>
<dbReference type="InParanoid" id="P97411"/>
<dbReference type="OMA" id="NACSEPI"/>
<dbReference type="OrthoDB" id="2126778at2759"/>
<dbReference type="PhylomeDB" id="P97411"/>
<dbReference type="TreeFam" id="TF317186"/>
<dbReference type="BioGRID-ORCS" id="15893">
    <property type="hits" value="4 hits in 80 CRISPR screens"/>
</dbReference>
<dbReference type="ChiTaRS" id="Ica1">
    <property type="organism name" value="mouse"/>
</dbReference>
<dbReference type="PRO" id="PR:P97411"/>
<dbReference type="Proteomes" id="UP000000589">
    <property type="component" value="Chromosome 6"/>
</dbReference>
<dbReference type="RNAct" id="P97411">
    <property type="molecule type" value="protein"/>
</dbReference>
<dbReference type="Bgee" id="ENSMUSG00000062995">
    <property type="expression patterns" value="Expressed in spermatid and 237 other cell types or tissues"/>
</dbReference>
<dbReference type="ExpressionAtlas" id="P97411">
    <property type="expression patterns" value="baseline and differential"/>
</dbReference>
<dbReference type="GO" id="GO:0005829">
    <property type="term" value="C:cytosol"/>
    <property type="evidence" value="ECO:0000314"/>
    <property type="project" value="UniProtKB"/>
</dbReference>
<dbReference type="GO" id="GO:0000139">
    <property type="term" value="C:Golgi membrane"/>
    <property type="evidence" value="ECO:0000250"/>
    <property type="project" value="UniProtKB"/>
</dbReference>
<dbReference type="GO" id="GO:0030667">
    <property type="term" value="C:secretory granule membrane"/>
    <property type="evidence" value="ECO:0000250"/>
    <property type="project" value="UniProtKB"/>
</dbReference>
<dbReference type="GO" id="GO:0030672">
    <property type="term" value="C:synaptic vesicle membrane"/>
    <property type="evidence" value="ECO:0000314"/>
    <property type="project" value="UniProtKB"/>
</dbReference>
<dbReference type="GO" id="GO:0140090">
    <property type="term" value="F:membrane curvature sensor activity"/>
    <property type="evidence" value="ECO:0007669"/>
    <property type="project" value="Ensembl"/>
</dbReference>
<dbReference type="GO" id="GO:0019904">
    <property type="term" value="F:protein domain specific binding"/>
    <property type="evidence" value="ECO:0007669"/>
    <property type="project" value="InterPro"/>
</dbReference>
<dbReference type="GO" id="GO:0006836">
    <property type="term" value="P:neurotransmitter transport"/>
    <property type="evidence" value="ECO:0007669"/>
    <property type="project" value="UniProtKB-KW"/>
</dbReference>
<dbReference type="GO" id="GO:0046928">
    <property type="term" value="P:regulation of neurotransmitter secretion"/>
    <property type="evidence" value="ECO:0000303"/>
    <property type="project" value="UniProtKB"/>
</dbReference>
<dbReference type="CDD" id="cd07661">
    <property type="entry name" value="BAR_ICA69"/>
    <property type="match status" value="1"/>
</dbReference>
<dbReference type="FunFam" id="1.20.1270.60:FF:000015">
    <property type="entry name" value="Islet cell autoantigen 1, 69kDa"/>
    <property type="match status" value="1"/>
</dbReference>
<dbReference type="Gene3D" id="1.20.1270.60">
    <property type="entry name" value="Arfaptin homology (AH) domain/BAR domain"/>
    <property type="match status" value="1"/>
</dbReference>
<dbReference type="InterPro" id="IPR027267">
    <property type="entry name" value="AH/BAR_dom_sf"/>
</dbReference>
<dbReference type="InterPro" id="IPR010504">
    <property type="entry name" value="AH_dom"/>
</dbReference>
<dbReference type="InterPro" id="IPR024114">
    <property type="entry name" value="Islet_autoAg_Ica1/Ica1-like"/>
</dbReference>
<dbReference type="InterPro" id="IPR006723">
    <property type="entry name" value="Islet_autoAg_Ica1_C"/>
</dbReference>
<dbReference type="PANTHER" id="PTHR10164">
    <property type="entry name" value="ISLET CELL AUTOANTIGEN 1"/>
    <property type="match status" value="1"/>
</dbReference>
<dbReference type="PANTHER" id="PTHR10164:SF3">
    <property type="entry name" value="ISLET CELL AUTOANTIGEN 1"/>
    <property type="match status" value="1"/>
</dbReference>
<dbReference type="Pfam" id="PF06456">
    <property type="entry name" value="Arfaptin"/>
    <property type="match status" value="1"/>
</dbReference>
<dbReference type="Pfam" id="PF04629">
    <property type="entry name" value="ICA69"/>
    <property type="match status" value="2"/>
</dbReference>
<dbReference type="SMART" id="SM01015">
    <property type="entry name" value="Arfaptin"/>
    <property type="match status" value="1"/>
</dbReference>
<dbReference type="SMART" id="SM01237">
    <property type="entry name" value="ICA69"/>
    <property type="match status" value="1"/>
</dbReference>
<dbReference type="SUPFAM" id="SSF103657">
    <property type="entry name" value="BAR/IMD domain-like"/>
    <property type="match status" value="1"/>
</dbReference>
<dbReference type="PROSITE" id="PS50870">
    <property type="entry name" value="AH"/>
    <property type="match status" value="1"/>
</dbReference>
<gene>
    <name evidence="12" type="primary">Ica1</name>
    <name type="synonym">Icap69</name>
</gene>
<evidence type="ECO:0000250" key="1"/>
<evidence type="ECO:0000255" key="2">
    <source>
        <dbReference type="PROSITE-ProRule" id="PRU00294"/>
    </source>
</evidence>
<evidence type="ECO:0000256" key="3">
    <source>
        <dbReference type="SAM" id="MobiDB-lite"/>
    </source>
</evidence>
<evidence type="ECO:0000269" key="4">
    <source>
    </source>
</evidence>
<evidence type="ECO:0000269" key="5">
    <source>
    </source>
</evidence>
<evidence type="ECO:0000269" key="6">
    <source>
    </source>
</evidence>
<evidence type="ECO:0000303" key="7">
    <source>
    </source>
</evidence>
<evidence type="ECO:0000303" key="8">
    <source>
    </source>
</evidence>
<evidence type="ECO:0000305" key="9"/>
<evidence type="ECO:0000312" key="10">
    <source>
        <dbReference type="EMBL" id="AAC99989.1"/>
    </source>
</evidence>
<evidence type="ECO:0000312" key="11">
    <source>
        <dbReference type="EMBL" id="AAH02030.1"/>
    </source>
</evidence>
<evidence type="ECO:0000312" key="12">
    <source>
        <dbReference type="MGI" id="MGI:96391"/>
    </source>
</evidence>
<name>ICA69_MOUSE</name>
<protein>
    <recommendedName>
        <fullName>Islet cell autoantigen 1</fullName>
    </recommendedName>
    <alternativeName>
        <fullName>69 kDa islet cell autoantigen</fullName>
        <shortName>ICA69</shortName>
    </alternativeName>
    <alternativeName>
        <fullName>Islet cell autoantigen p69</fullName>
        <shortName>ICAp69</shortName>
        <shortName>p69</shortName>
    </alternativeName>
</protein>
<accession>P97411</accession>
<accession>E9QLS3</accession>
<accession>P97362</accession>
<accession>P97954</accession>
<accession>Q99M40</accession>
<accession>Q9R2C4</accession>
<reference key="1">
    <citation type="journal article" date="1996" name="Genomics">
        <title>Genomic organization and transcript analysis of ICAp69, a target antigen in diabetic autoimmunity.</title>
        <authorList>
            <person name="Gaedigk R."/>
            <person name="Karges W."/>
            <person name="Hui M.F."/>
            <person name="Scherer S.W."/>
            <person name="Dosch H.-M."/>
        </authorList>
    </citation>
    <scope>NUCLEOTIDE SEQUENCE [MRNA] (ISOFORMS 1 AND 2)</scope>
    <source>
        <strain>NOD</strain>
        <tissue>Brain</tissue>
    </source>
</reference>
<reference key="2">
    <citation type="journal article" date="1997" name="Biochim. Biophys. Acta">
        <title>Molecular cloning of murine ICA69: diabetes-prone mice recognize the human autoimmune-epitope, Tep69, conserved in splice variants from both species.</title>
        <authorList>
            <person name="Karges W.J.P."/>
            <person name="Gaedigk R."/>
            <person name="Hui M.F."/>
            <person name="Cheung R.K."/>
            <person name="Dosch H.-M."/>
        </authorList>
    </citation>
    <scope>NUCLEOTIDE SEQUENCE (ISOFORM 1)</scope>
    <source>
        <strain>NOD</strain>
        <tissue>Brain</tissue>
    </source>
</reference>
<reference key="3">
    <citation type="journal article" date="2009" name="PLoS Biol.">
        <title>Lineage-specific biology revealed by a finished genome assembly of the mouse.</title>
        <authorList>
            <person name="Church D.M."/>
            <person name="Goodstadt L."/>
            <person name="Hillier L.W."/>
            <person name="Zody M.C."/>
            <person name="Goldstein S."/>
            <person name="She X."/>
            <person name="Bult C.J."/>
            <person name="Agarwala R."/>
            <person name="Cherry J.L."/>
            <person name="DiCuccio M."/>
            <person name="Hlavina W."/>
            <person name="Kapustin Y."/>
            <person name="Meric P."/>
            <person name="Maglott D."/>
            <person name="Birtle Z."/>
            <person name="Marques A.C."/>
            <person name="Graves T."/>
            <person name="Zhou S."/>
            <person name="Teague B."/>
            <person name="Potamousis K."/>
            <person name="Churas C."/>
            <person name="Place M."/>
            <person name="Herschleb J."/>
            <person name="Runnheim R."/>
            <person name="Forrest D."/>
            <person name="Amos-Landgraf J."/>
            <person name="Schwartz D.C."/>
            <person name="Cheng Z."/>
            <person name="Lindblad-Toh K."/>
            <person name="Eichler E.E."/>
            <person name="Ponting C.P."/>
        </authorList>
    </citation>
    <scope>NUCLEOTIDE SEQUENCE [LARGE SCALE GENOMIC DNA]</scope>
    <source>
        <strain>C57BL/6J</strain>
    </source>
</reference>
<reference evidence="9 11" key="4">
    <citation type="journal article" date="2004" name="Genome Res.">
        <title>The status, quality, and expansion of the NIH full-length cDNA project: the Mammalian Gene Collection (MGC).</title>
        <authorList>
            <consortium name="The MGC Project Team"/>
        </authorList>
    </citation>
    <scope>NUCLEOTIDE SEQUENCE [LARGE SCALE MRNA] (ISOFORM 1)</scope>
    <source>
        <tissue evidence="11">Mammary gland</tissue>
    </source>
</reference>
<reference evidence="9 10" key="5">
    <citation type="submission" date="1995-08" db="EMBL/GenBank/DDBJ databases">
        <title>Islet cell antigen p69 in non-obese diabetic mice: cloning, alternative splicing, and demonstration of T cell cross-reactivity to bovine serum albumin.</title>
        <authorList>
            <person name="Karges W.J.P."/>
            <person name="Gaedigk R."/>
            <person name="Hui M.F."/>
            <person name="Cheung R.K."/>
            <person name="Dosch H.-M."/>
        </authorList>
    </citation>
    <scope>NUCLEOTIDE SEQUENCE OF 6-478 (ISOFORM 1)</scope>
    <source>
        <strain evidence="10">BALB/cJ</strain>
    </source>
</reference>
<reference evidence="9" key="6">
    <citation type="journal article" date="2000" name="Mol. Biol. Cell">
        <title>The diabetes autoantigen ICA69 and its Caenorhabditis elegans homologue, ric-19, are conserved regulators of neuroendocrine secretion.</title>
        <authorList>
            <person name="Pilon M."/>
            <person name="Peng X.-R."/>
            <person name="Spence A.M."/>
            <person name="Plasterk R.H.A."/>
            <person name="Dosch H.-M."/>
        </authorList>
    </citation>
    <scope>SUBCELLULAR LOCATION</scope>
    <scope>TISSUE SPECIFICITY</scope>
</reference>
<reference evidence="9" key="7">
    <citation type="journal article" date="2002" name="J. Immunol.">
        <title>ICA69(null) nonobese diabetic mice develop diabetes, but resist disease acceleration by cyclophosphamide.</title>
        <authorList>
            <person name="Winer S."/>
            <person name="Astsaturov I."/>
            <person name="Gaedigk R."/>
            <person name="Hammond-McKibben D."/>
            <person name="Pilon M."/>
            <person name="Song A."/>
            <person name="Kubiak V."/>
            <person name="Karges W."/>
            <person name="Arpaia E."/>
            <person name="McKerlie C."/>
            <person name="Zucker P."/>
            <person name="Singh B."/>
            <person name="Dosch H.-M."/>
        </authorList>
    </citation>
    <scope>DISRUPTION PHENOTYPE</scope>
</reference>
<reference key="8">
    <citation type="journal article" date="2010" name="Cell">
        <title>A tissue-specific atlas of mouse protein phosphorylation and expression.</title>
        <authorList>
            <person name="Huttlin E.L."/>
            <person name="Jedrychowski M.P."/>
            <person name="Elias J.E."/>
            <person name="Goswami T."/>
            <person name="Rad R."/>
            <person name="Beausoleil S.A."/>
            <person name="Villen J."/>
            <person name="Haas W."/>
            <person name="Sowa M.E."/>
            <person name="Gygi S.P."/>
        </authorList>
    </citation>
    <scope>IDENTIFICATION BY MASS SPECTROMETRY [LARGE SCALE ANALYSIS]</scope>
    <source>
        <tissue>Brain</tissue>
        <tissue>Pancreas</tissue>
    </source>
</reference>